<comment type="function">
    <molecule>Glucagon</molecule>
    <text evidence="2">Plays a key role in glucose metabolism and homeostasis. Regulates blood glucose by increasing gluconeogenesis and decreasing glycolysis.</text>
</comment>
<comment type="function">
    <molecule>Glucagon-like peptide 1</molecule>
    <text evidence="2">Potent stimulator of glucose-dependent insulin release. Plays important roles on gastric motility and the suppression of plasma glucagon levels. May be involved in the suppression of satiety and stimulation of glucose disposal in peripheral tissues, independent of the actions of insulin. Has growth-promoting activities on intestinal epithelium. May also regulate the hypothalamic pituitary axis (HPA) via effects on LH, TSH, CRH, oxytocin, and vasopressin secretion. Increases islet mass through stimulation of islet neogenesis and pancreatic beta cell proliferation.</text>
</comment>
<comment type="function">
    <molecule>Glucagon-like peptide 2</molecule>
    <text evidence="2">Stimulates intestinal growth and up-regulates villus height in the small intestine, concomitant with increased crypt cell proliferation and decreased enterocyte apoptosis. The gastrointestinal tract, from the stomach to the colon is the principal target for GLP-2 action. Plays a key role in nutrient homeostasis, enhancing nutrient assimilation through enhanced gastrointestinal function, as well as increasing nutrient disposal. Stimulates intestinal glucose transport and decreases mucosal permeability.</text>
</comment>
<comment type="subcellular location">
    <subcellularLocation>
        <location>Secreted</location>
    </subcellularLocation>
</comment>
<comment type="alternative products">
    <event type="alternative splicing"/>
    <isoform>
        <id>P68259-1</id>
        <id>P01277-1</id>
        <name>Intestinal</name>
        <sequence type="displayed"/>
    </isoform>
    <isoform>
        <id>P68259-2</id>
        <id>P01277-2</id>
        <name>Pancreatic</name>
        <sequence type="described" ref="VSP_001753 VSP_001754"/>
    </isoform>
</comment>
<comment type="induction">
    <text>Produced in the A cells of the islets of Langerhans in response to a drop in blood sugar concentration.</text>
</comment>
<comment type="PTM">
    <text evidence="1">Proglucagon is post-translationally processed in a tissue-specific manner in pancreatic A cells and intestinal L cells. In pancreatic A cells, the major bioactive hormone is glucagon cleaved by PCSK2/PC2. In the intestinal L cells PCSK1/PC1 liberates GLP-1 and GLP-2. GLP-1 is further N-terminally truncated by post-translational processing in the intestinal L cells resulting in GLP-1(7-37) GLP-1-(7-36)amide (By similarity).</text>
</comment>
<comment type="similarity">
    <text evidence="9">Belongs to the glucagon family.</text>
</comment>
<proteinExistence type="evidence at protein level"/>
<dbReference type="EMBL" id="Y07539">
    <property type="protein sequence ID" value="CAA68827.1"/>
    <property type="molecule type" value="mRNA"/>
</dbReference>
<dbReference type="EMBL" id="S78477">
    <property type="protein sequence ID" value="AAB34506.1"/>
    <property type="molecule type" value="mRNA"/>
</dbReference>
<dbReference type="PIR" id="I51301">
    <property type="entry name" value="I51301"/>
</dbReference>
<dbReference type="PIR" id="S09992">
    <property type="entry name" value="GCCH"/>
</dbReference>
<dbReference type="RefSeq" id="NP_001177094.1">
    <molecule id="P68259-1"/>
    <property type="nucleotide sequence ID" value="NM_001190165.5"/>
</dbReference>
<dbReference type="RefSeq" id="NP_990591.1">
    <molecule id="P68259-2"/>
    <property type="nucleotide sequence ID" value="NM_205260.6"/>
</dbReference>
<dbReference type="RefSeq" id="XP_015145124.1">
    <property type="nucleotide sequence ID" value="XM_015289638.1"/>
</dbReference>
<dbReference type="RefSeq" id="XP_015145125.1">
    <property type="nucleotide sequence ID" value="XM_015289639.1"/>
</dbReference>
<dbReference type="RefSeq" id="XP_015145126.1">
    <property type="nucleotide sequence ID" value="XM_015289640.1"/>
</dbReference>
<dbReference type="SMR" id="P68259"/>
<dbReference type="FunCoup" id="P68259">
    <property type="interactions" value="17"/>
</dbReference>
<dbReference type="STRING" id="9031.ENSGALP00000032494"/>
<dbReference type="PaxDb" id="9031-ENSGALP00000018068"/>
<dbReference type="Ensembl" id="ENSGALT00010050857.1">
    <molecule id="P68259-1"/>
    <property type="protein sequence ID" value="ENSGALP00010030048.1"/>
    <property type="gene ID" value="ENSGALG00010021021.1"/>
</dbReference>
<dbReference type="GeneID" id="396196"/>
<dbReference type="KEGG" id="gga:396196"/>
<dbReference type="CTD" id="2641"/>
<dbReference type="VEuPathDB" id="HostDB:geneid_396196"/>
<dbReference type="eggNOG" id="ENOG502RYPR">
    <property type="taxonomic scope" value="Eukaryota"/>
</dbReference>
<dbReference type="GeneTree" id="ENSGT00390000005372"/>
<dbReference type="HOGENOM" id="CLU_090687_0_0_1"/>
<dbReference type="InParanoid" id="P68259"/>
<dbReference type="OMA" id="MNTKRNX"/>
<dbReference type="OrthoDB" id="9904258at2759"/>
<dbReference type="PhylomeDB" id="P68259"/>
<dbReference type="TreeFam" id="TF332333"/>
<dbReference type="Reactome" id="R-GGA-163359">
    <property type="pathway name" value="Glucagon signaling in metabolic regulation"/>
</dbReference>
<dbReference type="Reactome" id="R-GGA-381771">
    <property type="pathway name" value="Synthesis, secretion, and inactivation of Glucagon-like Peptide-1 (GLP-1)"/>
</dbReference>
<dbReference type="Reactome" id="R-GGA-416476">
    <property type="pathway name" value="G alpha (q) signalling events"/>
</dbReference>
<dbReference type="Reactome" id="R-GGA-418555">
    <property type="pathway name" value="G alpha (s) signalling events"/>
</dbReference>
<dbReference type="Reactome" id="R-GGA-420092">
    <property type="pathway name" value="Glucagon-type ligand receptors"/>
</dbReference>
<dbReference type="Reactome" id="R-GGA-422085">
    <property type="pathway name" value="Synthesis, secretion, and deacylation of Ghrelin"/>
</dbReference>
<dbReference type="PRO" id="PR:P68259"/>
<dbReference type="Proteomes" id="UP000000539">
    <property type="component" value="Chromosome 7"/>
</dbReference>
<dbReference type="Bgee" id="ENSGALG00000011104">
    <property type="expression patterns" value="Expressed in spermatocyte and 10 other cell types or tissues"/>
</dbReference>
<dbReference type="GO" id="GO:0005737">
    <property type="term" value="C:cytoplasm"/>
    <property type="evidence" value="ECO:0007669"/>
    <property type="project" value="Ensembl"/>
</dbReference>
<dbReference type="GO" id="GO:0005615">
    <property type="term" value="C:extracellular space"/>
    <property type="evidence" value="ECO:0000318"/>
    <property type="project" value="GO_Central"/>
</dbReference>
<dbReference type="GO" id="GO:0005886">
    <property type="term" value="C:plasma membrane"/>
    <property type="evidence" value="ECO:0007669"/>
    <property type="project" value="Ensembl"/>
</dbReference>
<dbReference type="GO" id="GO:0031769">
    <property type="term" value="F:glucagon receptor binding"/>
    <property type="evidence" value="ECO:0000318"/>
    <property type="project" value="GO_Central"/>
</dbReference>
<dbReference type="GO" id="GO:0005179">
    <property type="term" value="F:hormone activity"/>
    <property type="evidence" value="ECO:0000318"/>
    <property type="project" value="GO_Central"/>
</dbReference>
<dbReference type="GO" id="GO:0042802">
    <property type="term" value="F:identical protein binding"/>
    <property type="evidence" value="ECO:0007669"/>
    <property type="project" value="Ensembl"/>
</dbReference>
<dbReference type="GO" id="GO:0007189">
    <property type="term" value="P:adenylate cyclase-activating G protein-coupled receptor signaling pathway"/>
    <property type="evidence" value="ECO:0007669"/>
    <property type="project" value="Ensembl"/>
</dbReference>
<dbReference type="GO" id="GO:0007188">
    <property type="term" value="P:adenylate cyclase-modulating G protein-coupled receptor signaling pathway"/>
    <property type="evidence" value="ECO:0000318"/>
    <property type="project" value="GO_Central"/>
</dbReference>
<dbReference type="GO" id="GO:0071377">
    <property type="term" value="P:cellular response to glucagon stimulus"/>
    <property type="evidence" value="ECO:0007669"/>
    <property type="project" value="Ensembl"/>
</dbReference>
<dbReference type="GO" id="GO:0006094">
    <property type="term" value="P:gluconeogenesis"/>
    <property type="evidence" value="ECO:0007669"/>
    <property type="project" value="Ensembl"/>
</dbReference>
<dbReference type="GO" id="GO:0042593">
    <property type="term" value="P:glucose homeostasis"/>
    <property type="evidence" value="ECO:0007669"/>
    <property type="project" value="Ensembl"/>
</dbReference>
<dbReference type="GO" id="GO:0043066">
    <property type="term" value="P:negative regulation of apoptotic process"/>
    <property type="evidence" value="ECO:0000318"/>
    <property type="project" value="GO_Central"/>
</dbReference>
<dbReference type="GO" id="GO:0032099">
    <property type="term" value="P:negative regulation of appetite"/>
    <property type="evidence" value="ECO:0000314"/>
    <property type="project" value="AgBase"/>
</dbReference>
<dbReference type="GO" id="GO:1900118">
    <property type="term" value="P:negative regulation of execution phase of apoptosis"/>
    <property type="evidence" value="ECO:0007669"/>
    <property type="project" value="Ensembl"/>
</dbReference>
<dbReference type="GO" id="GO:0090280">
    <property type="term" value="P:positive regulation of calcium ion import"/>
    <property type="evidence" value="ECO:0007669"/>
    <property type="project" value="Ensembl"/>
</dbReference>
<dbReference type="GO" id="GO:0070374">
    <property type="term" value="P:positive regulation of ERK1 and ERK2 cascade"/>
    <property type="evidence" value="ECO:0007669"/>
    <property type="project" value="Ensembl"/>
</dbReference>
<dbReference type="GO" id="GO:0045722">
    <property type="term" value="P:positive regulation of gluconeogenesis"/>
    <property type="evidence" value="ECO:0007669"/>
    <property type="project" value="Ensembl"/>
</dbReference>
<dbReference type="GO" id="GO:0035774">
    <property type="term" value="P:positive regulation of insulin secretion involved in cellular response to glucose stimulus"/>
    <property type="evidence" value="ECO:0000318"/>
    <property type="project" value="GO_Central"/>
</dbReference>
<dbReference type="GO" id="GO:0010737">
    <property type="term" value="P:protein kinase A signaling"/>
    <property type="evidence" value="ECO:0000318"/>
    <property type="project" value="GO_Central"/>
</dbReference>
<dbReference type="GO" id="GO:0014823">
    <property type="term" value="P:response to activity"/>
    <property type="evidence" value="ECO:0007669"/>
    <property type="project" value="Ensembl"/>
</dbReference>
<dbReference type="Gene3D" id="6.10.250.590">
    <property type="match status" value="3"/>
</dbReference>
<dbReference type="InterPro" id="IPR015550">
    <property type="entry name" value="Glucagon"/>
</dbReference>
<dbReference type="InterPro" id="IPR000532">
    <property type="entry name" value="Glucagon_GIP_secretin_VIP"/>
</dbReference>
<dbReference type="PANTHER" id="PTHR11418">
    <property type="entry name" value="GLUCAGON"/>
    <property type="match status" value="1"/>
</dbReference>
<dbReference type="PANTHER" id="PTHR11418:SF0">
    <property type="entry name" value="PRO-GLUCAGON"/>
    <property type="match status" value="1"/>
</dbReference>
<dbReference type="Pfam" id="PF00123">
    <property type="entry name" value="Hormone_2"/>
    <property type="match status" value="3"/>
</dbReference>
<dbReference type="PIRSF" id="PIRSF037818">
    <property type="entry name" value="Glucagon"/>
    <property type="match status" value="1"/>
</dbReference>
<dbReference type="PRINTS" id="PR00275">
    <property type="entry name" value="GLUCAGON"/>
</dbReference>
<dbReference type="SMART" id="SM00070">
    <property type="entry name" value="GLUCA"/>
    <property type="match status" value="3"/>
</dbReference>
<dbReference type="PROSITE" id="PS00260">
    <property type="entry name" value="GLUCAGON"/>
    <property type="match status" value="4"/>
</dbReference>
<evidence type="ECO:0000250" key="1"/>
<evidence type="ECO:0000250" key="2">
    <source>
        <dbReference type="UniProtKB" id="P01275"/>
    </source>
</evidence>
<evidence type="ECO:0000250" key="3">
    <source>
        <dbReference type="UniProtKB" id="P09686"/>
    </source>
</evidence>
<evidence type="ECO:0000250" key="4">
    <source>
        <dbReference type="UniProtKB" id="P15438"/>
    </source>
</evidence>
<evidence type="ECO:0000256" key="5">
    <source>
        <dbReference type="SAM" id="MobiDB-lite"/>
    </source>
</evidence>
<evidence type="ECO:0000269" key="6">
    <source>
    </source>
</evidence>
<evidence type="ECO:0000269" key="7">
    <source>
    </source>
</evidence>
<evidence type="ECO:0000303" key="8">
    <source>
    </source>
</evidence>
<evidence type="ECO:0000305" key="9"/>
<keyword id="KW-0025">Alternative splicing</keyword>
<keyword id="KW-0027">Amidation</keyword>
<keyword id="KW-0165">Cleavage on pair of basic residues</keyword>
<keyword id="KW-0903">Direct protein sequencing</keyword>
<keyword id="KW-0372">Hormone</keyword>
<keyword id="KW-1185">Reference proteome</keyword>
<keyword id="KW-0964">Secreted</keyword>
<keyword id="KW-0732">Signal</keyword>
<reference key="1">
    <citation type="journal article" date="1990" name="FEBS Lett.">
        <title>Nucleotide sequence determination of chicken glucagon precursor cDNA. Chicken preproglucagon does not contain glucagon-like peptide II.</title>
        <authorList>
            <person name="Hasegawa S."/>
            <person name="Terazono K."/>
            <person name="Nata K."/>
            <person name="Takada T."/>
            <person name="Yamamoto H."/>
            <person name="Okamoto H."/>
        </authorList>
    </citation>
    <scope>NUCLEOTIDE SEQUENCE [MRNA] (ISOFORM PANCREATIC)</scope>
    <source>
        <tissue>Pancreas</tissue>
    </source>
</reference>
<reference key="2">
    <citation type="journal article" date="1995" name="Mol. Endocrinol.">
        <title>Trout and chicken proglucagon: alternative splicing generates mRNA transcripts encoding glucagon-like peptide 2.</title>
        <authorList>
            <person name="Irwin D.M."/>
            <person name="Wong J."/>
        </authorList>
    </citation>
    <scope>NUCLEOTIDE SEQUENCE [MRNA] (ISOFORM INTESTINAL)</scope>
    <source>
        <tissue>Intestinal mucosa</tissue>
    </source>
</reference>
<reference key="3">
    <citation type="journal article" date="1975" name="J. Biol. Chem.">
        <title>Chicken glucagon. Isolation and amino acid sequence studies.</title>
        <authorList>
            <person name="Pollock H.G."/>
            <person name="Kimmel J.R."/>
        </authorList>
    </citation>
    <scope>PROTEIN SEQUENCE OF 55-83</scope>
</reference>
<reference key="4">
    <citation type="journal article" date="1987" name="Horm. Metab. Res.">
        <title>Chicken glucagon: sequence and potency in receptor assay.</title>
        <authorList>
            <person name="Huang J."/>
            <person name="Eng J."/>
            <person name="Yalow R.S."/>
        </authorList>
    </citation>
    <scope>PROTEIN SEQUENCE OF 55-83</scope>
</reference>
<organism>
    <name type="scientific">Gallus gallus</name>
    <name type="common">Chicken</name>
    <dbReference type="NCBI Taxonomy" id="9031"/>
    <lineage>
        <taxon>Eukaryota</taxon>
        <taxon>Metazoa</taxon>
        <taxon>Chordata</taxon>
        <taxon>Craniata</taxon>
        <taxon>Vertebrata</taxon>
        <taxon>Euteleostomi</taxon>
        <taxon>Archelosauria</taxon>
        <taxon>Archosauria</taxon>
        <taxon>Dinosauria</taxon>
        <taxon>Saurischia</taxon>
        <taxon>Theropoda</taxon>
        <taxon>Coelurosauria</taxon>
        <taxon>Aves</taxon>
        <taxon>Neognathae</taxon>
        <taxon>Galloanserae</taxon>
        <taxon>Galliformes</taxon>
        <taxon>Phasianidae</taxon>
        <taxon>Phasianinae</taxon>
        <taxon>Gallus</taxon>
    </lineage>
</organism>
<accession>P68259</accession>
<accession>P01277</accession>
<accession>Q91410</accession>
<name>GLUC_CHICK</name>
<sequence>MKMKSIYFIAGLLLMIVQGSWQNPLQDTEEKSRSFKASQSEPLDESRQLNEVKRHSQGTFTSDYSKYLDSRRAQDFVQWLMSTKRNGQQGQEDKENDKFPDQLSSNAISKRHSEFERHAEGTYTSDITSYLEGQAAKEFIAWLVNGRGRRDFPEKALMAEEMGRRHADGTFTSDINKILDDMAAKEFLKWLINTKVTQRDLLGEYQ</sequence>
<protein>
    <recommendedName>
        <fullName>Pro-glucagon</fullName>
    </recommendedName>
    <component>
        <recommendedName>
            <fullName>Glicentin-related polypeptide</fullName>
            <shortName>GRPP</shortName>
        </recommendedName>
    </component>
    <component>
        <recommendedName>
            <fullName>Glucagon</fullName>
        </recommendedName>
    </component>
    <component>
        <recommendedName>
            <fullName>Glucagon-like peptide 1</fullName>
            <shortName>GLP-1</shortName>
        </recommendedName>
    </component>
    <component>
        <recommendedName>
            <fullName>Glucagon-like peptide 1(7-37)</fullName>
            <shortName>GLP-1(7-37)</shortName>
        </recommendedName>
    </component>
    <component>
        <recommendedName>
            <fullName>Glucagon-like peptide 1(7-36)</fullName>
            <shortName>GLP-1(7-36)</shortName>
        </recommendedName>
    </component>
    <component>
        <recommendedName>
            <fullName>Glucagon-like peptide 2</fullName>
            <shortName>GLP-2</shortName>
        </recommendedName>
    </component>
</protein>
<gene>
    <name type="primary">GCG</name>
</gene>
<feature type="signal peptide">
    <location>
        <begin position="1"/>
        <end position="22"/>
    </location>
</feature>
<feature type="peptide" id="PRO_0000011325" description="Glicentin-related polypeptide" evidence="3">
    <location>
        <begin position="23"/>
        <end position="52"/>
    </location>
</feature>
<feature type="peptide" id="PRO_0000011326" description="Glucagon" evidence="6 7">
    <location>
        <begin position="55"/>
        <end position="83"/>
    </location>
</feature>
<feature type="propeptide" id="PRO_0000011327" evidence="2">
    <location>
        <begin position="86"/>
        <end position="109"/>
    </location>
</feature>
<feature type="peptide" id="PRO_0000011328" description="Glucagon-like peptide 1" evidence="2">
    <location>
        <begin position="112"/>
        <end position="148"/>
    </location>
</feature>
<feature type="peptide" id="PRO_0000011329" description="Glucagon-like peptide 1(7-37)" evidence="2">
    <location>
        <begin position="118"/>
        <end position="148"/>
    </location>
</feature>
<feature type="peptide" id="PRO_0000011330" description="Glucagon-like peptide 1(7-36)" evidence="2">
    <location>
        <begin position="118"/>
        <end position="147"/>
    </location>
</feature>
<feature type="propeptide" id="PRO_0000011331" evidence="4">
    <location>
        <begin position="151"/>
        <end position="163"/>
    </location>
</feature>
<feature type="peptide" id="PRO_0000011332" description="Glucagon-like peptide 2" evidence="4">
    <location>
        <begin position="166"/>
        <end position="198"/>
    </location>
</feature>
<feature type="propeptide" id="PRO_0000011333" evidence="4">
    <location>
        <begin position="199"/>
        <end position="206"/>
    </location>
</feature>
<feature type="region of interest" description="Disordered" evidence="5">
    <location>
        <begin position="27"/>
        <end position="57"/>
    </location>
</feature>
<feature type="compositionally biased region" description="Basic and acidic residues" evidence="5">
    <location>
        <begin position="44"/>
        <end position="54"/>
    </location>
</feature>
<feature type="site" description="Cleavage; by PCSK2" evidence="1">
    <location>
        <begin position="54"/>
        <end position="55"/>
    </location>
</feature>
<feature type="site" description="Cleavage; by PCSK1 and PCSK2" evidence="1">
    <location>
        <begin position="85"/>
        <end position="86"/>
    </location>
</feature>
<feature type="site" description="Cleavage; by PCSK1" evidence="1">
    <location>
        <begin position="111"/>
        <end position="112"/>
    </location>
</feature>
<feature type="site" description="Cleavage; by PCSK1" evidence="1">
    <location>
        <begin position="117"/>
        <end position="118"/>
    </location>
</feature>
<feature type="site" description="Cleavage; by PCSK1" evidence="1">
    <location>
        <begin position="150"/>
        <end position="151"/>
    </location>
</feature>
<feature type="site" description="Cleavage; by PCSK1" evidence="1">
    <location>
        <begin position="165"/>
        <end position="166"/>
    </location>
</feature>
<feature type="modified residue" description="Arginine amide" evidence="1">
    <location>
        <position position="147"/>
    </location>
</feature>
<feature type="splice variant" id="VSP_001753" description="In isoform Pancreatic." evidence="8">
    <original>D</original>
    <variation>E</variation>
    <location>
        <position position="151"/>
    </location>
</feature>
<feature type="splice variant" id="VSP_001754" description="In isoform Pancreatic." evidence="8">
    <location>
        <begin position="152"/>
        <end position="206"/>
    </location>
</feature>